<organism>
    <name type="scientific">Streptococcus pneumoniae serotype 2 (strain D39 / NCTC 7466)</name>
    <dbReference type="NCBI Taxonomy" id="373153"/>
    <lineage>
        <taxon>Bacteria</taxon>
        <taxon>Bacillati</taxon>
        <taxon>Bacillota</taxon>
        <taxon>Bacilli</taxon>
        <taxon>Lactobacillales</taxon>
        <taxon>Streptococcaceae</taxon>
        <taxon>Streptococcus</taxon>
    </lineage>
</organism>
<dbReference type="EC" id="2.7.1.50" evidence="1"/>
<dbReference type="EMBL" id="CP000410">
    <property type="protein sequence ID" value="ABJ53957.1"/>
    <property type="molecule type" value="Genomic_DNA"/>
</dbReference>
<dbReference type="SMR" id="Q04LH9"/>
<dbReference type="PaxDb" id="373153-SPD_0623"/>
<dbReference type="KEGG" id="spd:SPD_0623"/>
<dbReference type="eggNOG" id="COG2145">
    <property type="taxonomic scope" value="Bacteria"/>
</dbReference>
<dbReference type="HOGENOM" id="CLU_019943_0_2_9"/>
<dbReference type="UniPathway" id="UPA00060">
    <property type="reaction ID" value="UER00139"/>
</dbReference>
<dbReference type="Proteomes" id="UP000001452">
    <property type="component" value="Chromosome"/>
</dbReference>
<dbReference type="GO" id="GO:0005524">
    <property type="term" value="F:ATP binding"/>
    <property type="evidence" value="ECO:0007669"/>
    <property type="project" value="UniProtKB-UniRule"/>
</dbReference>
<dbReference type="GO" id="GO:0004417">
    <property type="term" value="F:hydroxyethylthiazole kinase activity"/>
    <property type="evidence" value="ECO:0007669"/>
    <property type="project" value="UniProtKB-UniRule"/>
</dbReference>
<dbReference type="GO" id="GO:0000287">
    <property type="term" value="F:magnesium ion binding"/>
    <property type="evidence" value="ECO:0007669"/>
    <property type="project" value="UniProtKB-UniRule"/>
</dbReference>
<dbReference type="GO" id="GO:0009228">
    <property type="term" value="P:thiamine biosynthetic process"/>
    <property type="evidence" value="ECO:0007669"/>
    <property type="project" value="UniProtKB-KW"/>
</dbReference>
<dbReference type="GO" id="GO:0009229">
    <property type="term" value="P:thiamine diphosphate biosynthetic process"/>
    <property type="evidence" value="ECO:0007669"/>
    <property type="project" value="UniProtKB-UniRule"/>
</dbReference>
<dbReference type="CDD" id="cd01170">
    <property type="entry name" value="THZ_kinase"/>
    <property type="match status" value="1"/>
</dbReference>
<dbReference type="Gene3D" id="3.40.1190.20">
    <property type="match status" value="1"/>
</dbReference>
<dbReference type="HAMAP" id="MF_00228">
    <property type="entry name" value="Thz_kinase"/>
    <property type="match status" value="1"/>
</dbReference>
<dbReference type="InterPro" id="IPR000417">
    <property type="entry name" value="Hyethyz_kinase"/>
</dbReference>
<dbReference type="InterPro" id="IPR029056">
    <property type="entry name" value="Ribokinase-like"/>
</dbReference>
<dbReference type="NCBIfam" id="NF006830">
    <property type="entry name" value="PRK09355.1"/>
    <property type="match status" value="1"/>
</dbReference>
<dbReference type="NCBIfam" id="TIGR00694">
    <property type="entry name" value="thiM"/>
    <property type="match status" value="1"/>
</dbReference>
<dbReference type="Pfam" id="PF02110">
    <property type="entry name" value="HK"/>
    <property type="match status" value="1"/>
</dbReference>
<dbReference type="PIRSF" id="PIRSF000513">
    <property type="entry name" value="Thz_kinase"/>
    <property type="match status" value="1"/>
</dbReference>
<dbReference type="PRINTS" id="PR01099">
    <property type="entry name" value="HYETHTZKNASE"/>
</dbReference>
<dbReference type="SUPFAM" id="SSF53613">
    <property type="entry name" value="Ribokinase-like"/>
    <property type="match status" value="1"/>
</dbReference>
<evidence type="ECO:0000255" key="1">
    <source>
        <dbReference type="HAMAP-Rule" id="MF_00228"/>
    </source>
</evidence>
<protein>
    <recommendedName>
        <fullName evidence="1">Hydroxyethylthiazole kinase 1</fullName>
        <ecNumber evidence="1">2.7.1.50</ecNumber>
    </recommendedName>
    <alternativeName>
        <fullName evidence="1">4-methyl-5-beta-hydroxyethylthiazole kinase 1</fullName>
        <shortName evidence="1">TH kinase 1</shortName>
        <shortName evidence="1">Thz kinase 1</shortName>
    </alternativeName>
</protein>
<gene>
    <name evidence="1" type="primary">thiM1</name>
    <name type="ordered locus">SPD_0623</name>
</gene>
<reference key="1">
    <citation type="journal article" date="2007" name="J. Bacteriol.">
        <title>Genome sequence of Avery's virulent serotype 2 strain D39 of Streptococcus pneumoniae and comparison with that of unencapsulated laboratory strain R6.</title>
        <authorList>
            <person name="Lanie J.A."/>
            <person name="Ng W.-L."/>
            <person name="Kazmierczak K.M."/>
            <person name="Andrzejewski T.M."/>
            <person name="Davidsen T.M."/>
            <person name="Wayne K.J."/>
            <person name="Tettelin H."/>
            <person name="Glass J.I."/>
            <person name="Winkler M.E."/>
        </authorList>
    </citation>
    <scope>NUCLEOTIDE SEQUENCE [LARGE SCALE GENOMIC DNA]</scope>
    <source>
        <strain>D39 / NCTC 7466</strain>
    </source>
</reference>
<keyword id="KW-0067">ATP-binding</keyword>
<keyword id="KW-0418">Kinase</keyword>
<keyword id="KW-0460">Magnesium</keyword>
<keyword id="KW-0479">Metal-binding</keyword>
<keyword id="KW-0547">Nucleotide-binding</keyword>
<keyword id="KW-1185">Reference proteome</keyword>
<keyword id="KW-0784">Thiamine biosynthesis</keyword>
<keyword id="KW-0808">Transferase</keyword>
<name>THIM1_STRP2</name>
<sequence length="260" mass="27607">MTSLKLLKEKAPLVICITNDVVKNFTANGLVALGASPAMSEFPADLEDLLKYAGGLLINIGTLTDENWKLYQAALKIAEKYNVPAVLDPVACGAGEYRKKVADDLINNYKLAAIRGNAGEIASLVGIDVASKGVDSAGVDNIDEIALAANEKFNIPIVVTGEVDAIAVNGEVVTIHNGSAMMPKVIGTGCLLGAVVASFIGLEKGQELKSLETAMLVYNIAGEMAEKRPNGHLPGTFKVEFINALYEITDEDVKEFKRVK</sequence>
<feature type="chain" id="PRO_1000021538" description="Hydroxyethylthiazole kinase 1">
    <location>
        <begin position="1"/>
        <end position="260"/>
    </location>
</feature>
<feature type="binding site" evidence="1">
    <location>
        <position position="39"/>
    </location>
    <ligand>
        <name>substrate</name>
    </ligand>
</feature>
<feature type="binding site" evidence="1">
    <location>
        <position position="115"/>
    </location>
    <ligand>
        <name>ATP</name>
        <dbReference type="ChEBI" id="CHEBI:30616"/>
    </ligand>
</feature>
<feature type="binding site" evidence="1">
    <location>
        <position position="160"/>
    </location>
    <ligand>
        <name>ATP</name>
        <dbReference type="ChEBI" id="CHEBI:30616"/>
    </ligand>
</feature>
<feature type="binding site" evidence="1">
    <location>
        <position position="187"/>
    </location>
    <ligand>
        <name>substrate</name>
    </ligand>
</feature>
<proteinExistence type="inferred from homology"/>
<comment type="function">
    <text evidence="1">Catalyzes the phosphorylation of the hydroxyl group of 4-methyl-5-beta-hydroxyethylthiazole (THZ).</text>
</comment>
<comment type="catalytic activity">
    <reaction evidence="1">
        <text>5-(2-hydroxyethyl)-4-methylthiazole + ATP = 4-methyl-5-(2-phosphooxyethyl)-thiazole + ADP + H(+)</text>
        <dbReference type="Rhea" id="RHEA:24212"/>
        <dbReference type="ChEBI" id="CHEBI:15378"/>
        <dbReference type="ChEBI" id="CHEBI:17957"/>
        <dbReference type="ChEBI" id="CHEBI:30616"/>
        <dbReference type="ChEBI" id="CHEBI:58296"/>
        <dbReference type="ChEBI" id="CHEBI:456216"/>
        <dbReference type="EC" id="2.7.1.50"/>
    </reaction>
</comment>
<comment type="cofactor">
    <cofactor evidence="1">
        <name>Mg(2+)</name>
        <dbReference type="ChEBI" id="CHEBI:18420"/>
    </cofactor>
</comment>
<comment type="pathway">
    <text evidence="1">Cofactor biosynthesis; thiamine diphosphate biosynthesis; 4-methyl-5-(2-phosphoethyl)-thiazole from 5-(2-hydroxyethyl)-4-methylthiazole: step 1/1.</text>
</comment>
<comment type="similarity">
    <text evidence="1">Belongs to the Thz kinase family.</text>
</comment>
<accession>Q04LH9</accession>